<proteinExistence type="evidence at protein level"/>
<evidence type="ECO:0000250" key="1"/>
<evidence type="ECO:0000269" key="2">
    <source>
    </source>
</evidence>
<evidence type="ECO:0000305" key="3"/>
<sequence>MRPTARQFTLPDLFSICPLQDATNPWYKQAAAESRAWINSYNIFTDRKRAFFIQGSNELLCSHVYAYAGYEQFRTCCDFVNLLFVVDEISDDQNGQDARATGRIFVNAMRDAHWDDGSILAKITHEFRERFVRLAGPKTVRRFADLCESYTDCVAREAELRERNQVLGLNDFIALRRQNSAVLLCYSLVEYILGIDLDDEVYEDPTFAKAYWAACDFVCWANDVYSYDMEQAKGHTGNNVVTVLMKEKDLSLQEASDYIGRECEKQMRDYLEAKSQLLQSTDLPQEAVRYIEALGYWMVGNLVWSFESQRYFGAQHERVKATHVVHLRPSSVLEASCDSDSDSDC</sequence>
<organism>
    <name type="scientific">Coprinopsis cinerea (strain Okayama-7 / 130 / ATCC MYA-4618 / FGSC 9003)</name>
    <name type="common">Inky cap fungus</name>
    <name type="synonym">Hormographiella aspergillata</name>
    <dbReference type="NCBI Taxonomy" id="240176"/>
    <lineage>
        <taxon>Eukaryota</taxon>
        <taxon>Fungi</taxon>
        <taxon>Dikarya</taxon>
        <taxon>Basidiomycota</taxon>
        <taxon>Agaricomycotina</taxon>
        <taxon>Agaricomycetes</taxon>
        <taxon>Agaricomycetidae</taxon>
        <taxon>Agaricales</taxon>
        <taxon>Agaricineae</taxon>
        <taxon>Psathyrellaceae</taxon>
        <taxon>Coprinopsis</taxon>
    </lineage>
</organism>
<name>COP4_COPC7</name>
<dbReference type="EC" id="4.2.3.91"/>
<dbReference type="EC" id="4.2.3.129"/>
<dbReference type="EC" id="4.2.3.127"/>
<dbReference type="EC" id="4.2.3.128"/>
<dbReference type="EMBL" id="AACS02000004">
    <property type="protein sequence ID" value="EAU85540.1"/>
    <property type="molecule type" value="Genomic_DNA"/>
</dbReference>
<dbReference type="RefSeq" id="XP_001836356.1">
    <property type="nucleotide sequence ID" value="XM_001836304.1"/>
</dbReference>
<dbReference type="SMR" id="A8NU13"/>
<dbReference type="GeneID" id="6012899"/>
<dbReference type="KEGG" id="cci:CC1G_06441"/>
<dbReference type="VEuPathDB" id="FungiDB:CC1G_06441"/>
<dbReference type="eggNOG" id="ENOG502SJ7W">
    <property type="taxonomic scope" value="Eukaryota"/>
</dbReference>
<dbReference type="HOGENOM" id="CLU_042538_2_1_1"/>
<dbReference type="InParanoid" id="A8NU13"/>
<dbReference type="OMA" id="YTLMRLY"/>
<dbReference type="OrthoDB" id="2861623at2759"/>
<dbReference type="BRENDA" id="4.2.3.127">
    <property type="organism ID" value="1606"/>
</dbReference>
<dbReference type="BRENDA" id="4.2.3.128">
    <property type="organism ID" value="1606"/>
</dbReference>
<dbReference type="BRENDA" id="4.2.3.129">
    <property type="organism ID" value="1606"/>
</dbReference>
<dbReference type="SABIO-RK" id="A8NU13"/>
<dbReference type="Proteomes" id="UP000001861">
    <property type="component" value="Unassembled WGS sequence"/>
</dbReference>
<dbReference type="GO" id="GO:0046872">
    <property type="term" value="F:metal ion binding"/>
    <property type="evidence" value="ECO:0007669"/>
    <property type="project" value="UniProtKB-KW"/>
</dbReference>
<dbReference type="GO" id="GO:0010333">
    <property type="term" value="F:terpene synthase activity"/>
    <property type="evidence" value="ECO:0007669"/>
    <property type="project" value="InterPro"/>
</dbReference>
<dbReference type="GO" id="GO:0008299">
    <property type="term" value="P:isoprenoid biosynthetic process"/>
    <property type="evidence" value="ECO:0007669"/>
    <property type="project" value="UniProtKB-ARBA"/>
</dbReference>
<dbReference type="Gene3D" id="1.10.600.10">
    <property type="entry name" value="Farnesyl Diphosphate Synthase"/>
    <property type="match status" value="1"/>
</dbReference>
<dbReference type="InterPro" id="IPR008949">
    <property type="entry name" value="Isoprenoid_synthase_dom_sf"/>
</dbReference>
<dbReference type="InterPro" id="IPR034686">
    <property type="entry name" value="Terpene_cyclase-like_2"/>
</dbReference>
<dbReference type="PANTHER" id="PTHR35201:SF4">
    <property type="entry name" value="BETA-PINACENE SYNTHASE-RELATED"/>
    <property type="match status" value="1"/>
</dbReference>
<dbReference type="PANTHER" id="PTHR35201">
    <property type="entry name" value="TERPENE SYNTHASE"/>
    <property type="match status" value="1"/>
</dbReference>
<dbReference type="Pfam" id="PF19086">
    <property type="entry name" value="Terpene_syn_C_2"/>
    <property type="match status" value="1"/>
</dbReference>
<dbReference type="SFLD" id="SFLDS00005">
    <property type="entry name" value="Isoprenoid_Synthase_Type_I"/>
    <property type="match status" value="1"/>
</dbReference>
<dbReference type="SFLD" id="SFLDG01020">
    <property type="entry name" value="Terpene_Cyclase_Like_2"/>
    <property type="match status" value="1"/>
</dbReference>
<dbReference type="SUPFAM" id="SSF48576">
    <property type="entry name" value="Terpenoid synthases"/>
    <property type="match status" value="1"/>
</dbReference>
<gene>
    <name type="primary">COP4</name>
    <name type="ORF">CC1G_06441</name>
</gene>
<accession>A8NU13</accession>
<reference key="1">
    <citation type="journal article" date="2010" name="Proc. Natl. Acad. Sci. U.S.A.">
        <title>Insights into evolution of multicellular fungi from the assembled chromosomes of the mushroom Coprinopsis cinerea (Coprinus cinereus).</title>
        <authorList>
            <person name="Stajich J.E."/>
            <person name="Wilke S.K."/>
            <person name="Ahren D."/>
            <person name="Au C.H."/>
            <person name="Birren B.W."/>
            <person name="Borodovsky M."/>
            <person name="Burns C."/>
            <person name="Canbaeck B."/>
            <person name="Casselton L.A."/>
            <person name="Cheng C.K."/>
            <person name="Deng J."/>
            <person name="Dietrich F.S."/>
            <person name="Fargo D.C."/>
            <person name="Farman M.L."/>
            <person name="Gathman A.C."/>
            <person name="Goldberg J."/>
            <person name="Guigo R."/>
            <person name="Hoegger P.J."/>
            <person name="Hooker J.B."/>
            <person name="Huggins A."/>
            <person name="James T.Y."/>
            <person name="Kamada T."/>
            <person name="Kilaru S."/>
            <person name="Kodira C."/>
            <person name="Kuees U."/>
            <person name="Kupfer D."/>
            <person name="Kwan H.S."/>
            <person name="Lomsadze A."/>
            <person name="Li W."/>
            <person name="Lilly W.W."/>
            <person name="Ma L.-J."/>
            <person name="Mackey A.J."/>
            <person name="Manning G."/>
            <person name="Martin F."/>
            <person name="Muraguchi H."/>
            <person name="Natvig D.O."/>
            <person name="Palmerini H."/>
            <person name="Ramesh M.A."/>
            <person name="Rehmeyer C.J."/>
            <person name="Roe B.A."/>
            <person name="Shenoy N."/>
            <person name="Stanke M."/>
            <person name="Ter-Hovhannisyan V."/>
            <person name="Tunlid A."/>
            <person name="Velagapudi R."/>
            <person name="Vision T.J."/>
            <person name="Zeng Q."/>
            <person name="Zolan M.E."/>
            <person name="Pukkila P.J."/>
        </authorList>
    </citation>
    <scope>NUCLEOTIDE SEQUENCE [LARGE SCALE GENOMIC DNA]</scope>
    <source>
        <strain>Okayama-7 / 130 / ATCC MYA-4618 / FGSC 9003</strain>
    </source>
</reference>
<reference key="2">
    <citation type="journal article" date="2010" name="ChemBioChem">
        <title>Sesquiterpene synthases Cop4 and Cop6 from Coprinus cinereus: catalytic promiscuity and cyclization of farnesyl pyrophosphate geometric isomers.</title>
        <authorList>
            <person name="Lopez-Gallego F."/>
            <person name="Agger S.A."/>
            <person name="Abate-Pella D."/>
            <person name="Distefano M.D."/>
            <person name="Schmidt-Dannert C."/>
        </authorList>
    </citation>
    <scope>FUNCTION</scope>
    <scope>CATALYTIC ACTIVITY</scope>
    <scope>BIOPHYSICOCHEMICAL PROPERTIES</scope>
</reference>
<comment type="function">
    <text evidence="2">Sesquiterpene synthase that catalyzes the cyclization of farnesyl diphosphate (FPP) into multiple products, including germacrene D, beta-copaene, beta-cubebene, (+)-sativene and cubebol, a natural sesquiterpene alcohol used in the food industry for its cooling and refreshing taste. Terpenoid hydrocarbons resulting from cyclization of farnesyl diphosphate are intermediates in the biosynthesis of biologically active compounds such as antibiotics, toxins and pheromones.</text>
</comment>
<comment type="catalytic activity">
    <reaction evidence="2">
        <text>(2E,6E)-farnesyl diphosphate + H2O = cubebol + diphosphate</text>
        <dbReference type="Rhea" id="RHEA:31823"/>
        <dbReference type="ChEBI" id="CHEBI:15377"/>
        <dbReference type="ChEBI" id="CHEBI:33019"/>
        <dbReference type="ChEBI" id="CHEBI:63446"/>
        <dbReference type="ChEBI" id="CHEBI:175763"/>
        <dbReference type="EC" id="4.2.3.91"/>
    </reaction>
</comment>
<comment type="catalytic activity">
    <reaction evidence="2">
        <text>(2E,6E)-farnesyl diphosphate = beta-copaene + diphosphate</text>
        <dbReference type="Rhea" id="RHEA:33111"/>
        <dbReference type="ChEBI" id="CHEBI:33019"/>
        <dbReference type="ChEBI" id="CHEBI:64799"/>
        <dbReference type="ChEBI" id="CHEBI:175763"/>
        <dbReference type="EC" id="4.2.3.127"/>
    </reaction>
</comment>
<comment type="catalytic activity">
    <reaction evidence="2">
        <text>(2E,6E)-farnesyl diphosphate = beta-cubebene + diphosphate</text>
        <dbReference type="Rhea" id="RHEA:32019"/>
        <dbReference type="ChEBI" id="CHEBI:10363"/>
        <dbReference type="ChEBI" id="CHEBI:33019"/>
        <dbReference type="ChEBI" id="CHEBI:175763"/>
        <dbReference type="EC" id="4.2.3.128"/>
    </reaction>
</comment>
<comment type="catalytic activity">
    <reaction evidence="2">
        <text>(2E,6E)-farnesyl diphosphate = (+)-sativene + diphosphate</text>
        <dbReference type="Rhea" id="RHEA:33119"/>
        <dbReference type="ChEBI" id="CHEBI:33019"/>
        <dbReference type="ChEBI" id="CHEBI:175763"/>
        <dbReference type="ChEBI" id="CHEBI:231783"/>
        <dbReference type="EC" id="4.2.3.129"/>
    </reaction>
</comment>
<comment type="cofactor">
    <cofactor evidence="1">
        <name>Mg(2+)</name>
        <dbReference type="ChEBI" id="CHEBI:18420"/>
    </cofactor>
    <text evidence="1">Binds 3 Mg(2+) ions per subunit.</text>
</comment>
<comment type="biophysicochemical properties">
    <kinetics>
        <KM evidence="2">11 uM for all-trans-farnesyl diphosphate</KM>
        <KM evidence="2">20 uM for cis-trans-farnesyl diophosphate</KM>
        <KM evidence="2">24 uM for trans-geranyl diphosphate</KM>
    </kinetics>
</comment>
<comment type="domain">
    <text evidence="1">The Asp-Asp-Xaa-Xaa-Asp/Glu (DDXXD/E) motif is important for the catalytic activity, presumably through binding to Mg(2+).</text>
</comment>
<comment type="similarity">
    <text evidence="3">Belongs to the terpene synthase family.</text>
</comment>
<keyword id="KW-0456">Lyase</keyword>
<keyword id="KW-0460">Magnesium</keyword>
<keyword id="KW-0479">Metal-binding</keyword>
<keyword id="KW-1185">Reference proteome</keyword>
<feature type="chain" id="PRO_0000416224" description="Linoleate 10R-lipoxygenase COP4">
    <location>
        <begin position="1"/>
        <end position="345"/>
    </location>
</feature>
<feature type="short sequence motif" description="DDXXD motif">
    <location>
        <begin position="87"/>
        <end position="91"/>
    </location>
</feature>
<feature type="binding site" evidence="1">
    <location>
        <position position="87"/>
    </location>
    <ligand>
        <name>Mg(2+)</name>
        <dbReference type="ChEBI" id="CHEBI:18420"/>
        <label>1</label>
    </ligand>
</feature>
<feature type="binding site" evidence="1">
    <location>
        <position position="87"/>
    </location>
    <ligand>
        <name>Mg(2+)</name>
        <dbReference type="ChEBI" id="CHEBI:18420"/>
        <label>2</label>
    </ligand>
</feature>
<feature type="binding site" evidence="1">
    <location>
        <position position="91"/>
    </location>
    <ligand>
        <name>Mg(2+)</name>
        <dbReference type="ChEBI" id="CHEBI:18420"/>
        <label>1</label>
    </ligand>
</feature>
<feature type="binding site" evidence="1">
    <location>
        <position position="91"/>
    </location>
    <ligand>
        <name>Mg(2+)</name>
        <dbReference type="ChEBI" id="CHEBI:18420"/>
        <label>2</label>
    </ligand>
</feature>
<feature type="binding site" evidence="1">
    <location>
        <position position="222"/>
    </location>
    <ligand>
        <name>Mg(2+)</name>
        <dbReference type="ChEBI" id="CHEBI:18420"/>
        <label>3</label>
    </ligand>
</feature>
<feature type="binding site" evidence="1">
    <location>
        <position position="226"/>
    </location>
    <ligand>
        <name>Mg(2+)</name>
        <dbReference type="ChEBI" id="CHEBI:18420"/>
        <label>3</label>
    </ligand>
</feature>
<feature type="binding site" evidence="1">
    <location>
        <position position="230"/>
    </location>
    <ligand>
        <name>Mg(2+)</name>
        <dbReference type="ChEBI" id="CHEBI:18420"/>
        <label>3</label>
    </ligand>
</feature>
<protein>
    <recommendedName>
        <fullName>Linoleate 10R-lipoxygenase COP4</fullName>
        <ecNumber>4.2.3.91</ecNumber>
    </recommendedName>
    <alternativeName>
        <fullName>(+)-sativene synthase</fullName>
        <ecNumber>4.2.3.129</ecNumber>
    </alternativeName>
    <alternativeName>
        <fullName>Beta-copaene synthase</fullName>
        <ecNumber>4.2.3.127</ecNumber>
    </alternativeName>
    <alternativeName>
        <fullName>Beta-cubebene synthase</fullName>
        <ecNumber>4.2.3.128</ecNumber>
    </alternativeName>
    <alternativeName>
        <fullName>Sesquiterpene synthase COP4</fullName>
    </alternativeName>
</protein>